<keyword id="KW-0175">Coiled coil</keyword>
<keyword id="KW-0256">Endoplasmic reticulum</keyword>
<keyword id="KW-0342">GTP-binding</keyword>
<keyword id="KW-0378">Hydrolase</keyword>
<keyword id="KW-0472">Membrane</keyword>
<keyword id="KW-0547">Nucleotide-binding</keyword>
<keyword id="KW-0812">Transmembrane</keyword>
<keyword id="KW-1133">Transmembrane helix</keyword>
<dbReference type="EC" id="3.6.5.-" evidence="1"/>
<dbReference type="EMBL" id="DS549788">
    <property type="protein sequence ID" value="EDR24883.1"/>
    <property type="molecule type" value="Genomic_DNA"/>
</dbReference>
<dbReference type="RefSeq" id="XP_001738770.1">
    <property type="nucleotide sequence ID" value="XM_001738718.1"/>
</dbReference>
<dbReference type="SMR" id="B0EKR0"/>
<dbReference type="EnsemblProtists" id="EDR24883">
    <property type="protein sequence ID" value="EDR24883"/>
    <property type="gene ID" value="EDI_026070"/>
</dbReference>
<dbReference type="GeneID" id="5883871"/>
<dbReference type="KEGG" id="edi:EDI_026070"/>
<dbReference type="VEuPathDB" id="AmoebaDB:EDI_026070"/>
<dbReference type="eggNOG" id="KOG2203">
    <property type="taxonomic scope" value="Eukaryota"/>
</dbReference>
<dbReference type="OMA" id="SYAHEEE"/>
<dbReference type="OrthoDB" id="1597724at2759"/>
<dbReference type="Proteomes" id="UP000008076">
    <property type="component" value="Unassembled WGS sequence"/>
</dbReference>
<dbReference type="GO" id="GO:0005789">
    <property type="term" value="C:endoplasmic reticulum membrane"/>
    <property type="evidence" value="ECO:0007669"/>
    <property type="project" value="UniProtKB-SubCell"/>
</dbReference>
<dbReference type="GO" id="GO:0005525">
    <property type="term" value="F:GTP binding"/>
    <property type="evidence" value="ECO:0007669"/>
    <property type="project" value="UniProtKB-UniRule"/>
</dbReference>
<dbReference type="GO" id="GO:0003924">
    <property type="term" value="F:GTPase activity"/>
    <property type="evidence" value="ECO:0007669"/>
    <property type="project" value="UniProtKB-UniRule"/>
</dbReference>
<dbReference type="GO" id="GO:0016320">
    <property type="term" value="P:endoplasmic reticulum membrane fusion"/>
    <property type="evidence" value="ECO:0007669"/>
    <property type="project" value="TreeGrafter"/>
</dbReference>
<dbReference type="FunFam" id="3.40.50.300:FF:000727">
    <property type="entry name" value="Protein SEY1 homolog"/>
    <property type="match status" value="1"/>
</dbReference>
<dbReference type="Gene3D" id="3.40.50.300">
    <property type="entry name" value="P-loop containing nucleotide triphosphate hydrolases"/>
    <property type="match status" value="1"/>
</dbReference>
<dbReference type="HAMAP" id="MF_03109">
    <property type="entry name" value="Sey1"/>
    <property type="match status" value="1"/>
</dbReference>
<dbReference type="InterPro" id="IPR030386">
    <property type="entry name" value="G_GB1_RHD3_dom"/>
</dbReference>
<dbReference type="InterPro" id="IPR027417">
    <property type="entry name" value="P-loop_NTPase"/>
</dbReference>
<dbReference type="InterPro" id="IPR008803">
    <property type="entry name" value="RHD3/Sey1"/>
</dbReference>
<dbReference type="InterPro" id="IPR046758">
    <property type="entry name" value="Sey1/RHD3-like_3HB"/>
</dbReference>
<dbReference type="PANTHER" id="PTHR45923">
    <property type="entry name" value="PROTEIN SEY1"/>
    <property type="match status" value="1"/>
</dbReference>
<dbReference type="PANTHER" id="PTHR45923:SF2">
    <property type="entry name" value="PROTEIN SEY1"/>
    <property type="match status" value="1"/>
</dbReference>
<dbReference type="Pfam" id="PF05879">
    <property type="entry name" value="RHD3_GTPase"/>
    <property type="match status" value="1"/>
</dbReference>
<dbReference type="Pfam" id="PF20428">
    <property type="entry name" value="Sey1_3HB"/>
    <property type="match status" value="1"/>
</dbReference>
<dbReference type="SUPFAM" id="SSF52540">
    <property type="entry name" value="P-loop containing nucleoside triphosphate hydrolases"/>
    <property type="match status" value="1"/>
</dbReference>
<dbReference type="PROSITE" id="PS51715">
    <property type="entry name" value="G_GB1_RHD3"/>
    <property type="match status" value="1"/>
</dbReference>
<comment type="function">
    <text evidence="1">Probable GTP-binding protein that may be involved in cell development.</text>
</comment>
<comment type="subcellular location">
    <subcellularLocation>
        <location evidence="1">Endoplasmic reticulum membrane</location>
        <topology evidence="1">Multi-pass membrane protein</topology>
    </subcellularLocation>
</comment>
<comment type="similarity">
    <text evidence="2">Belongs to the TRAFAC class dynamin-like GTPase superfamily. GB1/RHD3 GTPase family. RHD3 subfamily.</text>
</comment>
<feature type="chain" id="PRO_0000384945" description="Protein SEY1 homolog 2">
    <location>
        <begin position="1"/>
        <end position="829"/>
    </location>
</feature>
<feature type="topological domain" description="Cytoplasmic" evidence="1">
    <location>
        <begin position="1"/>
        <end position="728"/>
    </location>
</feature>
<feature type="transmembrane region" description="Helical" evidence="1">
    <location>
        <begin position="729"/>
        <end position="749"/>
    </location>
</feature>
<feature type="topological domain" description="Lumenal" evidence="1">
    <location>
        <begin position="750"/>
        <end position="752"/>
    </location>
</feature>
<feature type="transmembrane region" description="Helical" evidence="1">
    <location>
        <begin position="753"/>
        <end position="773"/>
    </location>
</feature>
<feature type="topological domain" description="Cytoplasmic" evidence="1">
    <location>
        <begin position="774"/>
        <end position="829"/>
    </location>
</feature>
<feature type="domain" description="GB1/RHD3-type G" evidence="2">
    <location>
        <begin position="83"/>
        <end position="305"/>
    </location>
</feature>
<feature type="region of interest" description="Disordered" evidence="3">
    <location>
        <begin position="1"/>
        <end position="21"/>
    </location>
</feature>
<feature type="coiled-coil region" evidence="1">
    <location>
        <begin position="372"/>
        <end position="396"/>
    </location>
</feature>
<feature type="coiled-coil region" evidence="1">
    <location>
        <begin position="576"/>
        <end position="596"/>
    </location>
</feature>
<feature type="binding site" evidence="1">
    <location>
        <begin position="93"/>
        <end position="100"/>
    </location>
    <ligand>
        <name>GTP</name>
        <dbReference type="ChEBI" id="CHEBI:37565"/>
    </ligand>
</feature>
<gene>
    <name type="ORF">EDI_026070</name>
</gene>
<accession>B0EKR0</accession>
<name>SEY12_ENTDS</name>
<evidence type="ECO:0000255" key="1">
    <source>
        <dbReference type="HAMAP-Rule" id="MF_03109"/>
    </source>
</evidence>
<evidence type="ECO:0000255" key="2">
    <source>
        <dbReference type="PROSITE-ProRule" id="PRU01052"/>
    </source>
</evidence>
<evidence type="ECO:0000256" key="3">
    <source>
        <dbReference type="SAM" id="MobiDB-lite"/>
    </source>
</evidence>
<protein>
    <recommendedName>
        <fullName evidence="1">Protein SEY1 homolog 2</fullName>
        <ecNumber evidence="1">3.6.5.-</ecNumber>
    </recommendedName>
</protein>
<reference key="1">
    <citation type="submission" date="2007-12" db="EMBL/GenBank/DDBJ databases">
        <title>Annotation of Entamoeba dispar SAW760.</title>
        <authorList>
            <person name="Lorenzi H."/>
            <person name="Inman J."/>
            <person name="Schobel S."/>
            <person name="Amedeo P."/>
            <person name="Caler E."/>
        </authorList>
    </citation>
    <scope>NUCLEOTIDE SEQUENCE [LARGE SCALE GENOMIC DNA]</scope>
    <source>
        <strain>ATCC PRA-260 / SAW760</strain>
    </source>
</reference>
<proteinExistence type="inferred from homology"/>
<sequence>MDEVSPTKHFTSKPLLPTKTPRDKAISHYVNALNSPRNVVKTEIPECGIQIIDGDGNFASTDTRERPSLKNYILSKPEFLKRGMDYNAVGILGAQSSGKSTLLNYLFNTKFRILNEVMGRSRTTHGVWMALSGKESNIVVFDLEGTDGSAREDDYSFERKTSLFSLSVCSVLMVNLWSHDVGRFQASNMSLLKTVFELNLQLFVKEETPKTLIVFVIRDREADTPFDQIERDIMEDIMRIWDSVIPPEKFINSPINRFFDFQFTSLPHYEHFYENFVEEVNLMKKKFDPKNKETYFLPQYNKEIPADGLSCFCEQIWETIKDNKDLDLPSQREMLSRYRCTEISNQIYKEFNDSIKGEMKTLKKGNIIEEFKKIMTKEIDTAIEKYKEVTERYMESIVEEIEEQLKKQLYGLVESLFERQAELMEKAIGKRVKGEFTIIRNEYALLYNKKEFNPMKYQKYSQELSRTKAVIERDWRKQFDESVPKFLAEKTKEKFNSVCKDIGIAYEDAVSKMAEVMKQHFGDYLESTIKPKITPYLEACKKDMWKNIRNVINTQFTNGFNKLEEGFKTCSNMNKDTIEEEIKKSKIDILNIIKELVIKRKTELPYLLERKFNNIFRFDNKGLPRKWEPTDDVDTLYFTARDETEDILDMYCYFRIEENDDQFKFTINYRDGDLPSESIEALPEGADEDKIILNHQERKELIETLNEFFEKGYLIALREKENSEIKYQIPLYLIVLVIFFGFDEFIAILTNPLLFILTLIIGGGIYIGYKLNLGGVAKNYIQYLLSMSLSSTMEYLRTIPFFTPLIDKIWPKDDNKDDDSTEETQEETK</sequence>
<organism>
    <name type="scientific">Entamoeba dispar (strain ATCC PRA-260 / SAW760)</name>
    <dbReference type="NCBI Taxonomy" id="370354"/>
    <lineage>
        <taxon>Eukaryota</taxon>
        <taxon>Amoebozoa</taxon>
        <taxon>Evosea</taxon>
        <taxon>Archamoebae</taxon>
        <taxon>Mastigamoebida</taxon>
        <taxon>Entamoebidae</taxon>
        <taxon>Entamoeba</taxon>
    </lineage>
</organism>